<feature type="initiator methionine" description="Removed" evidence="2">
    <location>
        <position position="1"/>
    </location>
</feature>
<feature type="chain" id="PRO_0000071456" description="Serine/threonine-protein phosphatase 2A 56 kDa regulatory subunit epsilon isoform">
    <location>
        <begin position="2"/>
        <end position="165" status="greater than"/>
    </location>
</feature>
<feature type="region of interest" description="Disordered" evidence="3">
    <location>
        <begin position="1"/>
        <end position="41"/>
    </location>
</feature>
<feature type="compositionally biased region" description="Basic residues" evidence="3">
    <location>
        <begin position="20"/>
        <end position="29"/>
    </location>
</feature>
<feature type="compositionally biased region" description="Low complexity" evidence="3">
    <location>
        <begin position="30"/>
        <end position="41"/>
    </location>
</feature>
<feature type="modified residue" description="N-acetylserine" evidence="2">
    <location>
        <position position="2"/>
    </location>
</feature>
<feature type="modified residue" description="Phosphothreonine" evidence="2">
    <location>
        <position position="7"/>
    </location>
</feature>
<feature type="modified residue" description="Phosphoserine" evidence="2">
    <location>
        <position position="30"/>
    </location>
</feature>
<feature type="modified residue" description="Phosphoserine" evidence="2">
    <location>
        <position position="32"/>
    </location>
</feature>
<feature type="modified residue" description="Phosphoserine" evidence="2">
    <location>
        <position position="34"/>
    </location>
</feature>
<feature type="non-terminal residue">
    <location>
        <position position="165"/>
    </location>
</feature>
<comment type="function">
    <text>The B regulatory subunit might modulate substrate selectivity and catalytic activity, and might also direct the localization of the catalytic enzyme to a particular subcellular compartment.</text>
</comment>
<comment type="subunit">
    <text evidence="1">PP2A consists of a common heterodimeric core enzyme, composed of a 36 kDa catalytic subunit (subunit C) and a 65 kDa constant regulatory subunit (PR65 or subunit A), that associates with a variety of regulatory subunits. Proteins that associate with the core dimer include three families of regulatory subunits B (the R2/B/PR55/B55, R3/B''/PR72/PR130/PR59 and R5/B'/B56 families), the 48 kDa variable regulatory subunit, viral proteins, and cell signaling molecules. Interacts with SGO1. Found in a complex with at least ARL2, PPP2CB; PPP2R1A, PPP2R2A, PPP2R5E and TBCD (By similarity).</text>
</comment>
<comment type="subcellular location">
    <subcellularLocation>
        <location evidence="1">Cytoplasm</location>
    </subcellularLocation>
</comment>
<comment type="tissue specificity">
    <text>Highly expressed in testis, lung and brain.</text>
</comment>
<comment type="similarity">
    <text evidence="4">Belongs to the phosphatase 2A regulatory subunit B56 family.</text>
</comment>
<comment type="caution">
    <text evidence="4">Nomenclature used in PubMed:8576224 refers to PP2A B subunit B' delta isoform, which is cited as PP2A B subunit epsilon-PR61 isoform in later publications.</text>
</comment>
<sequence length="165" mass="19048">MSSAPTTPPSVDKVDGFSRKSVRKARQKRSQSSSQFRSQGKPIELTPLPLLKDVPSSEQPELFLKKLQQCCVIFDFMDTLSDLKMKEYKRSTLNELVDYITISRGCLTEQTYPEVVRMVSCNIFRTLPPSDSNEFDPEEDEPTLEASWPHLQLVYEFFIRFLESQ</sequence>
<gene>
    <name type="primary">PPP2R5E</name>
</gene>
<name>2A5E_RABIT</name>
<accession>Q28654</accession>
<proteinExistence type="evidence at transcript level"/>
<organism>
    <name type="scientific">Oryctolagus cuniculus</name>
    <name type="common">Rabbit</name>
    <dbReference type="NCBI Taxonomy" id="9986"/>
    <lineage>
        <taxon>Eukaryota</taxon>
        <taxon>Metazoa</taxon>
        <taxon>Chordata</taxon>
        <taxon>Craniata</taxon>
        <taxon>Vertebrata</taxon>
        <taxon>Euteleostomi</taxon>
        <taxon>Mammalia</taxon>
        <taxon>Eutheria</taxon>
        <taxon>Euarchontoglires</taxon>
        <taxon>Glires</taxon>
        <taxon>Lagomorpha</taxon>
        <taxon>Leporidae</taxon>
        <taxon>Oryctolagus</taxon>
    </lineage>
</organism>
<dbReference type="EMBL" id="U38194">
    <property type="protein sequence ID" value="AAC48533.1"/>
    <property type="molecule type" value="mRNA"/>
</dbReference>
<dbReference type="SMR" id="Q28654"/>
<dbReference type="STRING" id="9986.ENSOCUP00000003063"/>
<dbReference type="PaxDb" id="9986-ENSOCUP00000003063"/>
<dbReference type="eggNOG" id="KOG2085">
    <property type="taxonomic scope" value="Eukaryota"/>
</dbReference>
<dbReference type="InParanoid" id="Q28654"/>
<dbReference type="Proteomes" id="UP000001811">
    <property type="component" value="Unplaced"/>
</dbReference>
<dbReference type="GO" id="GO:0005829">
    <property type="term" value="C:cytosol"/>
    <property type="evidence" value="ECO:0007669"/>
    <property type="project" value="TreeGrafter"/>
</dbReference>
<dbReference type="GO" id="GO:0005634">
    <property type="term" value="C:nucleus"/>
    <property type="evidence" value="ECO:0007669"/>
    <property type="project" value="TreeGrafter"/>
</dbReference>
<dbReference type="GO" id="GO:0000159">
    <property type="term" value="C:protein phosphatase type 2A complex"/>
    <property type="evidence" value="ECO:0007669"/>
    <property type="project" value="InterPro"/>
</dbReference>
<dbReference type="GO" id="GO:0072542">
    <property type="term" value="F:protein phosphatase activator activity"/>
    <property type="evidence" value="ECO:0007669"/>
    <property type="project" value="TreeGrafter"/>
</dbReference>
<dbReference type="GO" id="GO:0007165">
    <property type="term" value="P:signal transduction"/>
    <property type="evidence" value="ECO:0007669"/>
    <property type="project" value="InterPro"/>
</dbReference>
<dbReference type="FunFam" id="1.25.10.10:FF:001585">
    <property type="entry name" value="Uncharacterized protein"/>
    <property type="match status" value="1"/>
</dbReference>
<dbReference type="Gene3D" id="1.25.10.10">
    <property type="entry name" value="Leucine-rich Repeat Variant"/>
    <property type="match status" value="1"/>
</dbReference>
<dbReference type="InterPro" id="IPR011989">
    <property type="entry name" value="ARM-like"/>
</dbReference>
<dbReference type="InterPro" id="IPR016024">
    <property type="entry name" value="ARM-type_fold"/>
</dbReference>
<dbReference type="InterPro" id="IPR002554">
    <property type="entry name" value="PP2A_B56"/>
</dbReference>
<dbReference type="PANTHER" id="PTHR10257">
    <property type="entry name" value="SERINE/THREONINE PROTEIN PHOSPHATASE 2A PP2A REGULATORY SUBUNIT B"/>
    <property type="match status" value="1"/>
</dbReference>
<dbReference type="PANTHER" id="PTHR10257:SF92">
    <property type="entry name" value="SERINE_THREONINE-PROTEIN PHOSPHATASE 2A 56 KDA REGULATORY SUBUNIT EPSILON ISOFORM"/>
    <property type="match status" value="1"/>
</dbReference>
<dbReference type="Pfam" id="PF01603">
    <property type="entry name" value="B56"/>
    <property type="match status" value="1"/>
</dbReference>
<dbReference type="SUPFAM" id="SSF48371">
    <property type="entry name" value="ARM repeat"/>
    <property type="match status" value="1"/>
</dbReference>
<keyword id="KW-0007">Acetylation</keyword>
<keyword id="KW-0963">Cytoplasm</keyword>
<keyword id="KW-0597">Phosphoprotein</keyword>
<keyword id="KW-1185">Reference proteome</keyword>
<evidence type="ECO:0000250" key="1"/>
<evidence type="ECO:0000250" key="2">
    <source>
        <dbReference type="UniProtKB" id="Q16537"/>
    </source>
</evidence>
<evidence type="ECO:0000256" key="3">
    <source>
        <dbReference type="SAM" id="MobiDB-lite"/>
    </source>
</evidence>
<evidence type="ECO:0000305" key="4"/>
<protein>
    <recommendedName>
        <fullName>Serine/threonine-protein phosphatase 2A 56 kDa regulatory subunit epsilon isoform</fullName>
    </recommendedName>
    <alternativeName>
        <fullName>PP2A B subunit isoform B'-delta</fullName>
    </alternativeName>
    <alternativeName>
        <fullName>PP2A B subunit isoform B'-epsilon</fullName>
    </alternativeName>
    <alternativeName>
        <fullName>PP2A B subunit isoform B56-epsilon</fullName>
    </alternativeName>
    <alternativeName>
        <fullName>PP2A B subunit isoform PR61-epsilon</fullName>
    </alternativeName>
    <alternativeName>
        <fullName>PP2A B subunit isoform R5-epsilon</fullName>
    </alternativeName>
</protein>
<reference key="1">
    <citation type="journal article" date="1996" name="J. Biol. Chem.">
        <title>High complexity in the expression of the B' subunit of protein phosphatase 2A0. Evidence for the existence of at least seven novel isoforms.</title>
        <authorList>
            <person name="Csortos C."/>
            <person name="Zolnierowicz S."/>
            <person name="Bako E."/>
            <person name="Durbin S.D."/>
            <person name="Depaoli-Roach A.A."/>
        </authorList>
    </citation>
    <scope>NUCLEOTIDE SEQUENCE [MRNA]</scope>
    <source>
        <strain>New Zealand</strain>
        <tissue>Brain</tissue>
    </source>
</reference>